<dbReference type="EMBL" id="CP000302">
    <property type="protein sequence ID" value="ABE53472.1"/>
    <property type="molecule type" value="Genomic_DNA"/>
</dbReference>
<dbReference type="RefSeq" id="WP_011494639.1">
    <property type="nucleotide sequence ID" value="NC_007954.1"/>
</dbReference>
<dbReference type="SMR" id="Q12SV4"/>
<dbReference type="STRING" id="318161.Sden_0175"/>
<dbReference type="KEGG" id="sdn:Sden_0175"/>
<dbReference type="eggNOG" id="COG0091">
    <property type="taxonomic scope" value="Bacteria"/>
</dbReference>
<dbReference type="HOGENOM" id="CLU_083987_3_3_6"/>
<dbReference type="OrthoDB" id="9805969at2"/>
<dbReference type="Proteomes" id="UP000001982">
    <property type="component" value="Chromosome"/>
</dbReference>
<dbReference type="GO" id="GO:0022625">
    <property type="term" value="C:cytosolic large ribosomal subunit"/>
    <property type="evidence" value="ECO:0007669"/>
    <property type="project" value="TreeGrafter"/>
</dbReference>
<dbReference type="GO" id="GO:0019843">
    <property type="term" value="F:rRNA binding"/>
    <property type="evidence" value="ECO:0007669"/>
    <property type="project" value="UniProtKB-UniRule"/>
</dbReference>
<dbReference type="GO" id="GO:0003735">
    <property type="term" value="F:structural constituent of ribosome"/>
    <property type="evidence" value="ECO:0007669"/>
    <property type="project" value="InterPro"/>
</dbReference>
<dbReference type="GO" id="GO:0006412">
    <property type="term" value="P:translation"/>
    <property type="evidence" value="ECO:0007669"/>
    <property type="project" value="UniProtKB-UniRule"/>
</dbReference>
<dbReference type="CDD" id="cd00336">
    <property type="entry name" value="Ribosomal_L22"/>
    <property type="match status" value="1"/>
</dbReference>
<dbReference type="FunFam" id="3.90.470.10:FF:000001">
    <property type="entry name" value="50S ribosomal protein L22"/>
    <property type="match status" value="1"/>
</dbReference>
<dbReference type="Gene3D" id="3.90.470.10">
    <property type="entry name" value="Ribosomal protein L22/L17"/>
    <property type="match status" value="1"/>
</dbReference>
<dbReference type="HAMAP" id="MF_01331_B">
    <property type="entry name" value="Ribosomal_uL22_B"/>
    <property type="match status" value="1"/>
</dbReference>
<dbReference type="InterPro" id="IPR001063">
    <property type="entry name" value="Ribosomal_uL22"/>
</dbReference>
<dbReference type="InterPro" id="IPR005727">
    <property type="entry name" value="Ribosomal_uL22_bac/chlpt-type"/>
</dbReference>
<dbReference type="InterPro" id="IPR047867">
    <property type="entry name" value="Ribosomal_uL22_bac/org-type"/>
</dbReference>
<dbReference type="InterPro" id="IPR018260">
    <property type="entry name" value="Ribosomal_uL22_CS"/>
</dbReference>
<dbReference type="InterPro" id="IPR036394">
    <property type="entry name" value="Ribosomal_uL22_sf"/>
</dbReference>
<dbReference type="NCBIfam" id="TIGR01044">
    <property type="entry name" value="rplV_bact"/>
    <property type="match status" value="1"/>
</dbReference>
<dbReference type="PANTHER" id="PTHR13501">
    <property type="entry name" value="CHLOROPLAST 50S RIBOSOMAL PROTEIN L22-RELATED"/>
    <property type="match status" value="1"/>
</dbReference>
<dbReference type="PANTHER" id="PTHR13501:SF8">
    <property type="entry name" value="LARGE RIBOSOMAL SUBUNIT PROTEIN UL22M"/>
    <property type="match status" value="1"/>
</dbReference>
<dbReference type="Pfam" id="PF00237">
    <property type="entry name" value="Ribosomal_L22"/>
    <property type="match status" value="1"/>
</dbReference>
<dbReference type="SUPFAM" id="SSF54843">
    <property type="entry name" value="Ribosomal protein L22"/>
    <property type="match status" value="1"/>
</dbReference>
<dbReference type="PROSITE" id="PS00464">
    <property type="entry name" value="RIBOSOMAL_L22"/>
    <property type="match status" value="1"/>
</dbReference>
<sequence>MEVLAKHRFARTSAQKARLVADQIRGLPVSKALEILTFSPKKAAVLVKKVLDSAIANAEHNEGADIDELRVGAVFVDEGPTMKRIMPRAKGRADRIMKRTSHITVVVADR</sequence>
<accession>Q12SV4</accession>
<feature type="chain" id="PRO_1000052645" description="Large ribosomal subunit protein uL22">
    <location>
        <begin position="1"/>
        <end position="110"/>
    </location>
</feature>
<comment type="function">
    <text evidence="1">This protein binds specifically to 23S rRNA; its binding is stimulated by other ribosomal proteins, e.g. L4, L17, and L20. It is important during the early stages of 50S assembly. It makes multiple contacts with different domains of the 23S rRNA in the assembled 50S subunit and ribosome (By similarity).</text>
</comment>
<comment type="function">
    <text evidence="1">The globular domain of the protein is located near the polypeptide exit tunnel on the outside of the subunit, while an extended beta-hairpin is found that lines the wall of the exit tunnel in the center of the 70S ribosome.</text>
</comment>
<comment type="subunit">
    <text evidence="1">Part of the 50S ribosomal subunit.</text>
</comment>
<comment type="similarity">
    <text evidence="1">Belongs to the universal ribosomal protein uL22 family.</text>
</comment>
<organism>
    <name type="scientific">Shewanella denitrificans (strain OS217 / ATCC BAA-1090 / DSM 15013)</name>
    <dbReference type="NCBI Taxonomy" id="318161"/>
    <lineage>
        <taxon>Bacteria</taxon>
        <taxon>Pseudomonadati</taxon>
        <taxon>Pseudomonadota</taxon>
        <taxon>Gammaproteobacteria</taxon>
        <taxon>Alteromonadales</taxon>
        <taxon>Shewanellaceae</taxon>
        <taxon>Shewanella</taxon>
    </lineage>
</organism>
<gene>
    <name evidence="1" type="primary">rplV</name>
    <name type="ordered locus">Sden_0175</name>
</gene>
<evidence type="ECO:0000255" key="1">
    <source>
        <dbReference type="HAMAP-Rule" id="MF_01331"/>
    </source>
</evidence>
<evidence type="ECO:0000305" key="2"/>
<name>RL22_SHEDO</name>
<keyword id="KW-1185">Reference proteome</keyword>
<keyword id="KW-0687">Ribonucleoprotein</keyword>
<keyword id="KW-0689">Ribosomal protein</keyword>
<keyword id="KW-0694">RNA-binding</keyword>
<keyword id="KW-0699">rRNA-binding</keyword>
<reference key="1">
    <citation type="submission" date="2006-03" db="EMBL/GenBank/DDBJ databases">
        <title>Complete sequence of Shewanella denitrificans OS217.</title>
        <authorList>
            <consortium name="US DOE Joint Genome Institute"/>
            <person name="Copeland A."/>
            <person name="Lucas S."/>
            <person name="Lapidus A."/>
            <person name="Barry K."/>
            <person name="Detter J.C."/>
            <person name="Glavina del Rio T."/>
            <person name="Hammon N."/>
            <person name="Israni S."/>
            <person name="Dalin E."/>
            <person name="Tice H."/>
            <person name="Pitluck S."/>
            <person name="Brettin T."/>
            <person name="Bruce D."/>
            <person name="Han C."/>
            <person name="Tapia R."/>
            <person name="Gilna P."/>
            <person name="Kiss H."/>
            <person name="Schmutz J."/>
            <person name="Larimer F."/>
            <person name="Land M."/>
            <person name="Hauser L."/>
            <person name="Kyrpides N."/>
            <person name="Lykidis A."/>
            <person name="Richardson P."/>
        </authorList>
    </citation>
    <scope>NUCLEOTIDE SEQUENCE [LARGE SCALE GENOMIC DNA]</scope>
    <source>
        <strain>OS217 / ATCC BAA-1090 / DSM 15013</strain>
    </source>
</reference>
<protein>
    <recommendedName>
        <fullName evidence="1">Large ribosomal subunit protein uL22</fullName>
    </recommendedName>
    <alternativeName>
        <fullName evidence="2">50S ribosomal protein L22</fullName>
    </alternativeName>
</protein>
<proteinExistence type="inferred from homology"/>